<geneLocation type="chloroplast"/>
<reference key="1">
    <citation type="submission" date="2007-03" db="EMBL/GenBank/DDBJ databases">
        <title>Sequencing analysis of Arabis hirsuta chloroplast DNA.</title>
        <authorList>
            <person name="Hosouchi T."/>
            <person name="Tsuruoka H."/>
            <person name="Kotani H."/>
        </authorList>
    </citation>
    <scope>NUCLEOTIDE SEQUENCE [LARGE SCALE GENOMIC DNA]</scope>
</reference>
<protein>
    <recommendedName>
        <fullName evidence="1">Small ribosomal subunit protein bS18c</fullName>
    </recommendedName>
    <alternativeName>
        <fullName evidence="3">30S ribosomal protein S18, chloroplastic</fullName>
    </alternativeName>
</protein>
<accession>A4QK40</accession>
<proteinExistence type="inferred from homology"/>
<gene>
    <name evidence="1" type="primary">rps18</name>
</gene>
<organism>
    <name type="scientific">Arabis hirsuta</name>
    <name type="common">Hairy rock-cress</name>
    <name type="synonym">Turritis hirsuta</name>
    <dbReference type="NCBI Taxonomy" id="78191"/>
    <lineage>
        <taxon>Eukaryota</taxon>
        <taxon>Viridiplantae</taxon>
        <taxon>Streptophyta</taxon>
        <taxon>Embryophyta</taxon>
        <taxon>Tracheophyta</taxon>
        <taxon>Spermatophyta</taxon>
        <taxon>Magnoliopsida</taxon>
        <taxon>eudicotyledons</taxon>
        <taxon>Gunneridae</taxon>
        <taxon>Pentapetalae</taxon>
        <taxon>rosids</taxon>
        <taxon>malvids</taxon>
        <taxon>Brassicales</taxon>
        <taxon>Brassicaceae</taxon>
        <taxon>Arabideae</taxon>
        <taxon>Arabis</taxon>
    </lineage>
</organism>
<keyword id="KW-0150">Chloroplast</keyword>
<keyword id="KW-0934">Plastid</keyword>
<keyword id="KW-0687">Ribonucleoprotein</keyword>
<keyword id="KW-0689">Ribosomal protein</keyword>
<keyword id="KW-0694">RNA-binding</keyword>
<keyword id="KW-0699">rRNA-binding</keyword>
<evidence type="ECO:0000255" key="1">
    <source>
        <dbReference type="HAMAP-Rule" id="MF_00270"/>
    </source>
</evidence>
<evidence type="ECO:0000256" key="2">
    <source>
        <dbReference type="SAM" id="MobiDB-lite"/>
    </source>
</evidence>
<evidence type="ECO:0000305" key="3"/>
<sequence length="101" mass="12062">MNKSKRPFTKSKRSFRRRLPPIQSGDRIDYRNMSLISRFISEQGKILSRRVNRVTLKQQRLITMAIKQARILSLLPFLNNQKQFERSESTPRTTSLRTRKK</sequence>
<feature type="chain" id="PRO_0000345568" description="Small ribosomal subunit protein bS18c">
    <location>
        <begin position="1"/>
        <end position="101"/>
    </location>
</feature>
<feature type="region of interest" description="Disordered" evidence="2">
    <location>
        <begin position="1"/>
        <end position="20"/>
    </location>
</feature>
<feature type="compositionally biased region" description="Basic residues" evidence="2">
    <location>
        <begin position="1"/>
        <end position="19"/>
    </location>
</feature>
<dbReference type="EMBL" id="AP009369">
    <property type="protein sequence ID" value="BAF50045.1"/>
    <property type="molecule type" value="Genomic_DNA"/>
</dbReference>
<dbReference type="RefSeq" id="YP_001123221.1">
    <property type="nucleotide sequence ID" value="NC_009268.1"/>
</dbReference>
<dbReference type="SMR" id="A4QK40"/>
<dbReference type="GeneID" id="4962541"/>
<dbReference type="GO" id="GO:0009507">
    <property type="term" value="C:chloroplast"/>
    <property type="evidence" value="ECO:0007669"/>
    <property type="project" value="UniProtKB-SubCell"/>
</dbReference>
<dbReference type="GO" id="GO:0005763">
    <property type="term" value="C:mitochondrial small ribosomal subunit"/>
    <property type="evidence" value="ECO:0007669"/>
    <property type="project" value="TreeGrafter"/>
</dbReference>
<dbReference type="GO" id="GO:0070181">
    <property type="term" value="F:small ribosomal subunit rRNA binding"/>
    <property type="evidence" value="ECO:0007669"/>
    <property type="project" value="TreeGrafter"/>
</dbReference>
<dbReference type="GO" id="GO:0003735">
    <property type="term" value="F:structural constituent of ribosome"/>
    <property type="evidence" value="ECO:0007669"/>
    <property type="project" value="InterPro"/>
</dbReference>
<dbReference type="GO" id="GO:0006412">
    <property type="term" value="P:translation"/>
    <property type="evidence" value="ECO:0007669"/>
    <property type="project" value="UniProtKB-UniRule"/>
</dbReference>
<dbReference type="FunFam" id="4.10.640.10:FF:000002">
    <property type="entry name" value="30S ribosomal protein S18, chloroplastic"/>
    <property type="match status" value="1"/>
</dbReference>
<dbReference type="Gene3D" id="4.10.640.10">
    <property type="entry name" value="Ribosomal protein S18"/>
    <property type="match status" value="1"/>
</dbReference>
<dbReference type="HAMAP" id="MF_00270">
    <property type="entry name" value="Ribosomal_bS18"/>
    <property type="match status" value="1"/>
</dbReference>
<dbReference type="InterPro" id="IPR001648">
    <property type="entry name" value="Ribosomal_bS18"/>
</dbReference>
<dbReference type="InterPro" id="IPR018275">
    <property type="entry name" value="Ribosomal_bS18_CS"/>
</dbReference>
<dbReference type="InterPro" id="IPR036870">
    <property type="entry name" value="Ribosomal_bS18_sf"/>
</dbReference>
<dbReference type="NCBIfam" id="TIGR00165">
    <property type="entry name" value="S18"/>
    <property type="match status" value="1"/>
</dbReference>
<dbReference type="PANTHER" id="PTHR13479">
    <property type="entry name" value="30S RIBOSOMAL PROTEIN S18"/>
    <property type="match status" value="1"/>
</dbReference>
<dbReference type="PANTHER" id="PTHR13479:SF40">
    <property type="entry name" value="SMALL RIBOSOMAL SUBUNIT PROTEIN BS18M"/>
    <property type="match status" value="1"/>
</dbReference>
<dbReference type="Pfam" id="PF01084">
    <property type="entry name" value="Ribosomal_S18"/>
    <property type="match status" value="1"/>
</dbReference>
<dbReference type="PRINTS" id="PR00974">
    <property type="entry name" value="RIBOSOMALS18"/>
</dbReference>
<dbReference type="SUPFAM" id="SSF46911">
    <property type="entry name" value="Ribosomal protein S18"/>
    <property type="match status" value="1"/>
</dbReference>
<dbReference type="PROSITE" id="PS00057">
    <property type="entry name" value="RIBOSOMAL_S18"/>
    <property type="match status" value="1"/>
</dbReference>
<comment type="subunit">
    <text evidence="1">Part of the 30S ribosomal subunit.</text>
</comment>
<comment type="subcellular location">
    <subcellularLocation>
        <location>Plastid</location>
        <location>Chloroplast</location>
    </subcellularLocation>
</comment>
<comment type="similarity">
    <text evidence="1">Belongs to the bacterial ribosomal protein bS18 family.</text>
</comment>
<name>RR18_ARAHI</name>